<sequence length="921" mass="102786">MVIGLLKTLVGSRNDRLLKQYRKVIAKVSAFEPSLQSLDDVALATKTAEFKLRLAAGESLDDIAAEAFAVVREASVRVMKMRHFDAQIMGGLALHQGKIAEMGTGEGKTLTATLPVYLNALTGKGVHVVTVNDYLAQRDAEWMSKLYNFLGMKVGVNLSQMDHTTKQAAYAADITYGTNNEFGFDYLRDNMVQDLDQRVQRGLAYAIVDEVDSILIDEARTPLIISGQAEDHTDLYIKINALPSHLERQIGEEKADGTGVEKPGDYWVDEKSQQVYLTERGHDKAEAVLVQLGALNDGDSLYAPQNITLMHHVFAALRAHTLYLRDQHYVVQNGEVIIVDEFTGRLMQGRRWSDGLHQAVEAKEGVQIQNENQTLATITFQNYFRMYGKLAGMTGTADTEAYEFKEIYNLETVVIPPNRISQRKDKQDQIFKSSRERYDAVIKDIEDCYERGQPVLVGTTSIENSELIAQLLDKRKLPHQVLNAKQHAREAEIIAQAGRPKMITIATNMAGRGTDIVLGGNVGKQSSLIDADSSLSDAEKASKIMQLQDEWQSIHDQVLASGGLHIIGTERHESRRIDNQLRGRSGRQGDPGSSRFYLSLDDPLLRIFAGDRLRAVMERLKMPDGEPIEAGIVTRSIESAQRKVEGRNFDIRKQLLEYDDVANDQRKETYRLRNEVLESSDIGDLIANLREDVLRAVCSVYVPLESMEEQWDLAGLENVLASEWGLTIVLKNWVEGADSVDDSEIVDRVLQLAKESYDAKVDLSGRESFASFERSVLLYSLDSHWREHLAALDYLRQGIHLRGYAQKDPKQEYRREAFELYGELLNVIKNDVVKSIMTVQIRSASELDQASESMNDDLAKLADVQYQHADPDMEVAGSTGDRGAAIDIQPAPLCAGPKVGRNDPCPCGSGKKYKNCCGALT</sequence>
<organism>
    <name type="scientific">Polynucleobacter necessarius subsp. necessarius (strain STIR1)</name>
    <dbReference type="NCBI Taxonomy" id="452638"/>
    <lineage>
        <taxon>Bacteria</taxon>
        <taxon>Pseudomonadati</taxon>
        <taxon>Pseudomonadota</taxon>
        <taxon>Betaproteobacteria</taxon>
        <taxon>Burkholderiales</taxon>
        <taxon>Burkholderiaceae</taxon>
        <taxon>Polynucleobacter</taxon>
    </lineage>
</organism>
<feature type="chain" id="PRO_1000145041" description="Protein translocase subunit SecA">
    <location>
        <begin position="1"/>
        <end position="921"/>
    </location>
</feature>
<feature type="region of interest" description="Disordered" evidence="2">
    <location>
        <begin position="575"/>
        <end position="594"/>
    </location>
</feature>
<feature type="binding site" evidence="1">
    <location>
        <position position="87"/>
    </location>
    <ligand>
        <name>ATP</name>
        <dbReference type="ChEBI" id="CHEBI:30616"/>
    </ligand>
</feature>
<feature type="binding site" evidence="1">
    <location>
        <begin position="105"/>
        <end position="109"/>
    </location>
    <ligand>
        <name>ATP</name>
        <dbReference type="ChEBI" id="CHEBI:30616"/>
    </ligand>
</feature>
<feature type="binding site" evidence="1">
    <location>
        <position position="515"/>
    </location>
    <ligand>
        <name>ATP</name>
        <dbReference type="ChEBI" id="CHEBI:30616"/>
    </ligand>
</feature>
<feature type="binding site" evidence="1">
    <location>
        <position position="905"/>
    </location>
    <ligand>
        <name>Zn(2+)</name>
        <dbReference type="ChEBI" id="CHEBI:29105"/>
    </ligand>
</feature>
<feature type="binding site" evidence="1">
    <location>
        <position position="907"/>
    </location>
    <ligand>
        <name>Zn(2+)</name>
        <dbReference type="ChEBI" id="CHEBI:29105"/>
    </ligand>
</feature>
<feature type="binding site" evidence="1">
    <location>
        <position position="916"/>
    </location>
    <ligand>
        <name>Zn(2+)</name>
        <dbReference type="ChEBI" id="CHEBI:29105"/>
    </ligand>
</feature>
<feature type="binding site" evidence="1">
    <location>
        <position position="917"/>
    </location>
    <ligand>
        <name>Zn(2+)</name>
        <dbReference type="ChEBI" id="CHEBI:29105"/>
    </ligand>
</feature>
<proteinExistence type="inferred from homology"/>
<evidence type="ECO:0000255" key="1">
    <source>
        <dbReference type="HAMAP-Rule" id="MF_01382"/>
    </source>
</evidence>
<evidence type="ECO:0000256" key="2">
    <source>
        <dbReference type="SAM" id="MobiDB-lite"/>
    </source>
</evidence>
<gene>
    <name evidence="1" type="primary">secA</name>
    <name type="ordered locus">Pnec_0190</name>
</gene>
<name>SECA_POLNS</name>
<keyword id="KW-0067">ATP-binding</keyword>
<keyword id="KW-0997">Cell inner membrane</keyword>
<keyword id="KW-1003">Cell membrane</keyword>
<keyword id="KW-0963">Cytoplasm</keyword>
<keyword id="KW-0472">Membrane</keyword>
<keyword id="KW-0479">Metal-binding</keyword>
<keyword id="KW-0547">Nucleotide-binding</keyword>
<keyword id="KW-0653">Protein transport</keyword>
<keyword id="KW-1278">Translocase</keyword>
<keyword id="KW-0811">Translocation</keyword>
<keyword id="KW-0813">Transport</keyword>
<keyword id="KW-0862">Zinc</keyword>
<protein>
    <recommendedName>
        <fullName evidence="1">Protein translocase subunit SecA</fullName>
        <ecNumber evidence="1">7.4.2.8</ecNumber>
    </recommendedName>
</protein>
<accession>B1XT18</accession>
<reference key="1">
    <citation type="journal article" date="2013" name="Proc. Natl. Acad. Sci. U.S.A.">
        <title>Polynucleobacter necessarius, a model for genome reduction in both free-living and symbiotic bacteria.</title>
        <authorList>
            <person name="Boscaro V."/>
            <person name="Felletti M."/>
            <person name="Vannini C."/>
            <person name="Ackerman M.S."/>
            <person name="Chain P.S."/>
            <person name="Malfatti S."/>
            <person name="Vergez L.M."/>
            <person name="Shin M."/>
            <person name="Doak T.G."/>
            <person name="Lynch M."/>
            <person name="Petroni G."/>
        </authorList>
    </citation>
    <scope>NUCLEOTIDE SEQUENCE [LARGE SCALE GENOMIC DNA]</scope>
    <source>
        <strain>STIR1</strain>
    </source>
</reference>
<dbReference type="EC" id="7.4.2.8" evidence="1"/>
<dbReference type="EMBL" id="CP001010">
    <property type="protein sequence ID" value="ACB43495.1"/>
    <property type="molecule type" value="Genomic_DNA"/>
</dbReference>
<dbReference type="SMR" id="B1XT18"/>
<dbReference type="STRING" id="452638.Pnec_0190"/>
<dbReference type="KEGG" id="pne:Pnec_0190"/>
<dbReference type="eggNOG" id="COG0653">
    <property type="taxonomic scope" value="Bacteria"/>
</dbReference>
<dbReference type="HOGENOM" id="CLU_005314_3_0_4"/>
<dbReference type="OrthoDB" id="9805579at2"/>
<dbReference type="GO" id="GO:0031522">
    <property type="term" value="C:cell envelope Sec protein transport complex"/>
    <property type="evidence" value="ECO:0007669"/>
    <property type="project" value="TreeGrafter"/>
</dbReference>
<dbReference type="GO" id="GO:0005829">
    <property type="term" value="C:cytosol"/>
    <property type="evidence" value="ECO:0007669"/>
    <property type="project" value="TreeGrafter"/>
</dbReference>
<dbReference type="GO" id="GO:0005886">
    <property type="term" value="C:plasma membrane"/>
    <property type="evidence" value="ECO:0007669"/>
    <property type="project" value="UniProtKB-SubCell"/>
</dbReference>
<dbReference type="GO" id="GO:0005524">
    <property type="term" value="F:ATP binding"/>
    <property type="evidence" value="ECO:0007669"/>
    <property type="project" value="UniProtKB-UniRule"/>
</dbReference>
<dbReference type="GO" id="GO:0046872">
    <property type="term" value="F:metal ion binding"/>
    <property type="evidence" value="ECO:0007669"/>
    <property type="project" value="UniProtKB-KW"/>
</dbReference>
<dbReference type="GO" id="GO:0008564">
    <property type="term" value="F:protein-exporting ATPase activity"/>
    <property type="evidence" value="ECO:0007669"/>
    <property type="project" value="UniProtKB-EC"/>
</dbReference>
<dbReference type="GO" id="GO:0065002">
    <property type="term" value="P:intracellular protein transmembrane transport"/>
    <property type="evidence" value="ECO:0007669"/>
    <property type="project" value="UniProtKB-UniRule"/>
</dbReference>
<dbReference type="GO" id="GO:0017038">
    <property type="term" value="P:protein import"/>
    <property type="evidence" value="ECO:0007669"/>
    <property type="project" value="InterPro"/>
</dbReference>
<dbReference type="GO" id="GO:0006605">
    <property type="term" value="P:protein targeting"/>
    <property type="evidence" value="ECO:0007669"/>
    <property type="project" value="UniProtKB-UniRule"/>
</dbReference>
<dbReference type="GO" id="GO:0043952">
    <property type="term" value="P:protein transport by the Sec complex"/>
    <property type="evidence" value="ECO:0007669"/>
    <property type="project" value="TreeGrafter"/>
</dbReference>
<dbReference type="CDD" id="cd17928">
    <property type="entry name" value="DEXDc_SecA"/>
    <property type="match status" value="1"/>
</dbReference>
<dbReference type="CDD" id="cd18803">
    <property type="entry name" value="SF2_C_secA"/>
    <property type="match status" value="1"/>
</dbReference>
<dbReference type="FunFam" id="3.40.50.300:FF:000113">
    <property type="entry name" value="Preprotein translocase subunit SecA"/>
    <property type="match status" value="1"/>
</dbReference>
<dbReference type="FunFam" id="3.90.1440.10:FF:000001">
    <property type="entry name" value="Preprotein translocase subunit SecA"/>
    <property type="match status" value="1"/>
</dbReference>
<dbReference type="FunFam" id="1.10.3060.10:FF:000003">
    <property type="entry name" value="Protein translocase subunit SecA"/>
    <property type="match status" value="1"/>
</dbReference>
<dbReference type="Gene3D" id="1.10.3060.10">
    <property type="entry name" value="Helical scaffold and wing domains of SecA"/>
    <property type="match status" value="1"/>
</dbReference>
<dbReference type="Gene3D" id="3.40.50.300">
    <property type="entry name" value="P-loop containing nucleotide triphosphate hydrolases"/>
    <property type="match status" value="2"/>
</dbReference>
<dbReference type="Gene3D" id="3.90.1440.10">
    <property type="entry name" value="SecA, preprotein cross-linking domain"/>
    <property type="match status" value="1"/>
</dbReference>
<dbReference type="HAMAP" id="MF_01382">
    <property type="entry name" value="SecA"/>
    <property type="match status" value="1"/>
</dbReference>
<dbReference type="InterPro" id="IPR014001">
    <property type="entry name" value="Helicase_ATP-bd"/>
</dbReference>
<dbReference type="InterPro" id="IPR001650">
    <property type="entry name" value="Helicase_C-like"/>
</dbReference>
<dbReference type="InterPro" id="IPR027417">
    <property type="entry name" value="P-loop_NTPase"/>
</dbReference>
<dbReference type="InterPro" id="IPR004027">
    <property type="entry name" value="SEC_C_motif"/>
</dbReference>
<dbReference type="InterPro" id="IPR000185">
    <property type="entry name" value="SecA"/>
</dbReference>
<dbReference type="InterPro" id="IPR020937">
    <property type="entry name" value="SecA_CS"/>
</dbReference>
<dbReference type="InterPro" id="IPR011115">
    <property type="entry name" value="SecA_DEAD"/>
</dbReference>
<dbReference type="InterPro" id="IPR014018">
    <property type="entry name" value="SecA_motor_DEAD"/>
</dbReference>
<dbReference type="InterPro" id="IPR011130">
    <property type="entry name" value="SecA_preprotein_X-link_dom"/>
</dbReference>
<dbReference type="InterPro" id="IPR044722">
    <property type="entry name" value="SecA_SF2_C"/>
</dbReference>
<dbReference type="InterPro" id="IPR011116">
    <property type="entry name" value="SecA_Wing/Scaffold"/>
</dbReference>
<dbReference type="InterPro" id="IPR036266">
    <property type="entry name" value="SecA_Wing/Scaffold_sf"/>
</dbReference>
<dbReference type="InterPro" id="IPR036670">
    <property type="entry name" value="SecA_X-link_sf"/>
</dbReference>
<dbReference type="NCBIfam" id="NF009538">
    <property type="entry name" value="PRK12904.1"/>
    <property type="match status" value="1"/>
</dbReference>
<dbReference type="NCBIfam" id="TIGR00963">
    <property type="entry name" value="secA"/>
    <property type="match status" value="1"/>
</dbReference>
<dbReference type="PANTHER" id="PTHR30612:SF0">
    <property type="entry name" value="CHLOROPLAST PROTEIN-TRANSPORTING ATPASE"/>
    <property type="match status" value="1"/>
</dbReference>
<dbReference type="PANTHER" id="PTHR30612">
    <property type="entry name" value="SECA INNER MEMBRANE COMPONENT OF SEC PROTEIN SECRETION SYSTEM"/>
    <property type="match status" value="1"/>
</dbReference>
<dbReference type="Pfam" id="PF21090">
    <property type="entry name" value="P-loop_SecA"/>
    <property type="match status" value="1"/>
</dbReference>
<dbReference type="Pfam" id="PF02810">
    <property type="entry name" value="SEC-C"/>
    <property type="match status" value="1"/>
</dbReference>
<dbReference type="Pfam" id="PF07517">
    <property type="entry name" value="SecA_DEAD"/>
    <property type="match status" value="1"/>
</dbReference>
<dbReference type="Pfam" id="PF01043">
    <property type="entry name" value="SecA_PP_bind"/>
    <property type="match status" value="1"/>
</dbReference>
<dbReference type="Pfam" id="PF07516">
    <property type="entry name" value="SecA_SW"/>
    <property type="match status" value="1"/>
</dbReference>
<dbReference type="PRINTS" id="PR00906">
    <property type="entry name" value="SECA"/>
</dbReference>
<dbReference type="SMART" id="SM00957">
    <property type="entry name" value="SecA_DEAD"/>
    <property type="match status" value="1"/>
</dbReference>
<dbReference type="SMART" id="SM00958">
    <property type="entry name" value="SecA_PP_bind"/>
    <property type="match status" value="1"/>
</dbReference>
<dbReference type="SUPFAM" id="SSF81886">
    <property type="entry name" value="Helical scaffold and wing domains of SecA"/>
    <property type="match status" value="1"/>
</dbReference>
<dbReference type="SUPFAM" id="SSF52540">
    <property type="entry name" value="P-loop containing nucleoside triphosphate hydrolases"/>
    <property type="match status" value="2"/>
</dbReference>
<dbReference type="SUPFAM" id="SSF81767">
    <property type="entry name" value="Pre-protein crosslinking domain of SecA"/>
    <property type="match status" value="1"/>
</dbReference>
<dbReference type="PROSITE" id="PS01312">
    <property type="entry name" value="SECA"/>
    <property type="match status" value="1"/>
</dbReference>
<dbReference type="PROSITE" id="PS51196">
    <property type="entry name" value="SECA_MOTOR_DEAD"/>
    <property type="match status" value="1"/>
</dbReference>
<comment type="function">
    <text evidence="1">Part of the Sec protein translocase complex. Interacts with the SecYEG preprotein conducting channel. Has a central role in coupling the hydrolysis of ATP to the transfer of proteins into and across the cell membrane, serving both as a receptor for the preprotein-SecB complex and as an ATP-driven molecular motor driving the stepwise translocation of polypeptide chains across the membrane.</text>
</comment>
<comment type="catalytic activity">
    <reaction evidence="1">
        <text>ATP + H2O + cellular proteinSide 1 = ADP + phosphate + cellular proteinSide 2.</text>
        <dbReference type="EC" id="7.4.2.8"/>
    </reaction>
</comment>
<comment type="cofactor">
    <cofactor evidence="1">
        <name>Zn(2+)</name>
        <dbReference type="ChEBI" id="CHEBI:29105"/>
    </cofactor>
    <text evidence="1">May bind 1 zinc ion per subunit.</text>
</comment>
<comment type="subunit">
    <text evidence="1">Monomer and homodimer. Part of the essential Sec protein translocation apparatus which comprises SecA, SecYEG and auxiliary proteins SecDF-YajC and YidC.</text>
</comment>
<comment type="subcellular location">
    <subcellularLocation>
        <location evidence="1">Cell inner membrane</location>
        <topology evidence="1">Peripheral membrane protein</topology>
        <orientation evidence="1">Cytoplasmic side</orientation>
    </subcellularLocation>
    <subcellularLocation>
        <location evidence="1">Cytoplasm</location>
    </subcellularLocation>
    <text evidence="1">Distribution is 50-50.</text>
</comment>
<comment type="similarity">
    <text evidence="1">Belongs to the SecA family.</text>
</comment>